<name>PFD6_MOUSE</name>
<reference key="1">
    <citation type="journal article" date="1991" name="Gene">
        <title>Primary structure of the embryo-expressed gene KE2 from the mouse H-2K region.</title>
        <authorList>
            <person name="Ha H."/>
            <person name="Abe K."/>
            <person name="Artzt K."/>
        </authorList>
    </citation>
    <scope>NUCLEOTIDE SEQUENCE [GENOMIC DNA / MRNA]</scope>
    <source>
        <tissue>Liver</tissue>
    </source>
</reference>
<reference key="2">
    <citation type="submission" date="1998-10" db="EMBL/GenBank/DDBJ databases">
        <title>Sequence of the mouse major histocomaptibility locus class II region.</title>
        <authorList>
            <person name="Rowen L."/>
            <person name="Qin S."/>
            <person name="Madan A."/>
            <person name="Loretz C."/>
            <person name="James R."/>
            <person name="Dors M."/>
            <person name="Mix L."/>
            <person name="Hall J."/>
            <person name="Lasky S."/>
            <person name="Hood L."/>
        </authorList>
    </citation>
    <scope>NUCLEOTIDE SEQUENCE [LARGE SCALE GENOMIC DNA]</scope>
    <source>
        <strain>129/SvJ</strain>
    </source>
</reference>
<reference key="3">
    <citation type="journal article" date="2005" name="Science">
        <title>The transcriptional landscape of the mammalian genome.</title>
        <authorList>
            <person name="Carninci P."/>
            <person name="Kasukawa T."/>
            <person name="Katayama S."/>
            <person name="Gough J."/>
            <person name="Frith M.C."/>
            <person name="Maeda N."/>
            <person name="Oyama R."/>
            <person name="Ravasi T."/>
            <person name="Lenhard B."/>
            <person name="Wells C."/>
            <person name="Kodzius R."/>
            <person name="Shimokawa K."/>
            <person name="Bajic V.B."/>
            <person name="Brenner S.E."/>
            <person name="Batalov S."/>
            <person name="Forrest A.R."/>
            <person name="Zavolan M."/>
            <person name="Davis M.J."/>
            <person name="Wilming L.G."/>
            <person name="Aidinis V."/>
            <person name="Allen J.E."/>
            <person name="Ambesi-Impiombato A."/>
            <person name="Apweiler R."/>
            <person name="Aturaliya R.N."/>
            <person name="Bailey T.L."/>
            <person name="Bansal M."/>
            <person name="Baxter L."/>
            <person name="Beisel K.W."/>
            <person name="Bersano T."/>
            <person name="Bono H."/>
            <person name="Chalk A.M."/>
            <person name="Chiu K.P."/>
            <person name="Choudhary V."/>
            <person name="Christoffels A."/>
            <person name="Clutterbuck D.R."/>
            <person name="Crowe M.L."/>
            <person name="Dalla E."/>
            <person name="Dalrymple B.P."/>
            <person name="de Bono B."/>
            <person name="Della Gatta G."/>
            <person name="di Bernardo D."/>
            <person name="Down T."/>
            <person name="Engstrom P."/>
            <person name="Fagiolini M."/>
            <person name="Faulkner G."/>
            <person name="Fletcher C.F."/>
            <person name="Fukushima T."/>
            <person name="Furuno M."/>
            <person name="Futaki S."/>
            <person name="Gariboldi M."/>
            <person name="Georgii-Hemming P."/>
            <person name="Gingeras T.R."/>
            <person name="Gojobori T."/>
            <person name="Green R.E."/>
            <person name="Gustincich S."/>
            <person name="Harbers M."/>
            <person name="Hayashi Y."/>
            <person name="Hensch T.K."/>
            <person name="Hirokawa N."/>
            <person name="Hill D."/>
            <person name="Huminiecki L."/>
            <person name="Iacono M."/>
            <person name="Ikeo K."/>
            <person name="Iwama A."/>
            <person name="Ishikawa T."/>
            <person name="Jakt M."/>
            <person name="Kanapin A."/>
            <person name="Katoh M."/>
            <person name="Kawasawa Y."/>
            <person name="Kelso J."/>
            <person name="Kitamura H."/>
            <person name="Kitano H."/>
            <person name="Kollias G."/>
            <person name="Krishnan S.P."/>
            <person name="Kruger A."/>
            <person name="Kummerfeld S.K."/>
            <person name="Kurochkin I.V."/>
            <person name="Lareau L.F."/>
            <person name="Lazarevic D."/>
            <person name="Lipovich L."/>
            <person name="Liu J."/>
            <person name="Liuni S."/>
            <person name="McWilliam S."/>
            <person name="Madan Babu M."/>
            <person name="Madera M."/>
            <person name="Marchionni L."/>
            <person name="Matsuda H."/>
            <person name="Matsuzawa S."/>
            <person name="Miki H."/>
            <person name="Mignone F."/>
            <person name="Miyake S."/>
            <person name="Morris K."/>
            <person name="Mottagui-Tabar S."/>
            <person name="Mulder N."/>
            <person name="Nakano N."/>
            <person name="Nakauchi H."/>
            <person name="Ng P."/>
            <person name="Nilsson R."/>
            <person name="Nishiguchi S."/>
            <person name="Nishikawa S."/>
            <person name="Nori F."/>
            <person name="Ohara O."/>
            <person name="Okazaki Y."/>
            <person name="Orlando V."/>
            <person name="Pang K.C."/>
            <person name="Pavan W.J."/>
            <person name="Pavesi G."/>
            <person name="Pesole G."/>
            <person name="Petrovsky N."/>
            <person name="Piazza S."/>
            <person name="Reed J."/>
            <person name="Reid J.F."/>
            <person name="Ring B.Z."/>
            <person name="Ringwald M."/>
            <person name="Rost B."/>
            <person name="Ruan Y."/>
            <person name="Salzberg S.L."/>
            <person name="Sandelin A."/>
            <person name="Schneider C."/>
            <person name="Schoenbach C."/>
            <person name="Sekiguchi K."/>
            <person name="Semple C.A."/>
            <person name="Seno S."/>
            <person name="Sessa L."/>
            <person name="Sheng Y."/>
            <person name="Shibata Y."/>
            <person name="Shimada H."/>
            <person name="Shimada K."/>
            <person name="Silva D."/>
            <person name="Sinclair B."/>
            <person name="Sperling S."/>
            <person name="Stupka E."/>
            <person name="Sugiura K."/>
            <person name="Sultana R."/>
            <person name="Takenaka Y."/>
            <person name="Taki K."/>
            <person name="Tammoja K."/>
            <person name="Tan S.L."/>
            <person name="Tang S."/>
            <person name="Taylor M.S."/>
            <person name="Tegner J."/>
            <person name="Teichmann S.A."/>
            <person name="Ueda H.R."/>
            <person name="van Nimwegen E."/>
            <person name="Verardo R."/>
            <person name="Wei C.L."/>
            <person name="Yagi K."/>
            <person name="Yamanishi H."/>
            <person name="Zabarovsky E."/>
            <person name="Zhu S."/>
            <person name="Zimmer A."/>
            <person name="Hide W."/>
            <person name="Bult C."/>
            <person name="Grimmond S.M."/>
            <person name="Teasdale R.D."/>
            <person name="Liu E.T."/>
            <person name="Brusic V."/>
            <person name="Quackenbush J."/>
            <person name="Wahlestedt C."/>
            <person name="Mattick J.S."/>
            <person name="Hume D.A."/>
            <person name="Kai C."/>
            <person name="Sasaki D."/>
            <person name="Tomaru Y."/>
            <person name="Fukuda S."/>
            <person name="Kanamori-Katayama M."/>
            <person name="Suzuki M."/>
            <person name="Aoki J."/>
            <person name="Arakawa T."/>
            <person name="Iida J."/>
            <person name="Imamura K."/>
            <person name="Itoh M."/>
            <person name="Kato T."/>
            <person name="Kawaji H."/>
            <person name="Kawagashira N."/>
            <person name="Kawashima T."/>
            <person name="Kojima M."/>
            <person name="Kondo S."/>
            <person name="Konno H."/>
            <person name="Nakano K."/>
            <person name="Ninomiya N."/>
            <person name="Nishio T."/>
            <person name="Okada M."/>
            <person name="Plessy C."/>
            <person name="Shibata K."/>
            <person name="Shiraki T."/>
            <person name="Suzuki S."/>
            <person name="Tagami M."/>
            <person name="Waki K."/>
            <person name="Watahiki A."/>
            <person name="Okamura-Oho Y."/>
            <person name="Suzuki H."/>
            <person name="Kawai J."/>
            <person name="Hayashizaki Y."/>
        </authorList>
    </citation>
    <scope>NUCLEOTIDE SEQUENCE [LARGE SCALE MRNA]</scope>
    <source>
        <strain>C57BL/6J</strain>
    </source>
</reference>
<reference key="4">
    <citation type="journal article" date="2004" name="Genome Res.">
        <title>The status, quality, and expansion of the NIH full-length cDNA project: the Mammalian Gene Collection (MGC).</title>
        <authorList>
            <consortium name="The MGC Project Team"/>
        </authorList>
    </citation>
    <scope>NUCLEOTIDE SEQUENCE [LARGE SCALE MRNA]</scope>
    <source>
        <strain>FVB/N-3</strain>
        <tissue>Mammary gland</tissue>
    </source>
</reference>
<reference key="5">
    <citation type="journal article" date="2010" name="Cell">
        <title>A tissue-specific atlas of mouse protein phosphorylation and expression.</title>
        <authorList>
            <person name="Huttlin E.L."/>
            <person name="Jedrychowski M.P."/>
            <person name="Elias J.E."/>
            <person name="Goswami T."/>
            <person name="Rad R."/>
            <person name="Beausoleil S.A."/>
            <person name="Villen J."/>
            <person name="Haas W."/>
            <person name="Sowa M.E."/>
            <person name="Gygi S.P."/>
        </authorList>
    </citation>
    <scope>IDENTIFICATION BY MASS SPECTROMETRY [LARGE SCALE ANALYSIS]</scope>
    <source>
        <tissue>Brain</tissue>
        <tissue>Lung</tissue>
        <tissue>Pancreas</tissue>
        <tissue>Spleen</tissue>
        <tissue>Testis</tissue>
    </source>
</reference>
<accession>Q03958</accession>
<comment type="function">
    <text evidence="1">Binds specifically to cytosolic chaperonin (c-CPN) and transfers target proteins to it. Binds to nascent polypeptide chain and promotes folding in an environment in which there are many competing pathways for nonnative proteins.</text>
</comment>
<comment type="subunit">
    <text evidence="1 2">Heterohexamer of two PFD-alpha type and four PFD-beta type subunits (By similarity). Component of the PAQosome complex which is responsible for the biogenesis of several protein complexes and which consists of R2TP complex members RUVBL1, RUVBL2, RPAP3 and PIH1D1, URI complex members PFDN2, PFDN6, PDRG1, UXT and URI1 as well as ASDURF, POLR2E and DNAAF10/WDR92 (By similarity).</text>
</comment>
<comment type="similarity">
    <text evidence="3">Belongs to the prefoldin subunit beta family.</text>
</comment>
<feature type="initiator methionine" description="Removed" evidence="1">
    <location>
        <position position="1"/>
    </location>
</feature>
<feature type="chain" id="PRO_0000124851" description="Prefoldin subunit 6">
    <location>
        <begin position="2"/>
        <end position="127"/>
    </location>
</feature>
<feature type="modified residue" description="N-acetylalanine" evidence="1">
    <location>
        <position position="2"/>
    </location>
</feature>
<feature type="modified residue" description="N6-acetyllysine" evidence="1">
    <location>
        <position position="21"/>
    </location>
</feature>
<feature type="modified residue" description="N6-acetyllysine; alternate" evidence="1">
    <location>
        <position position="66"/>
    </location>
</feature>
<feature type="cross-link" description="Glycyl lysine isopeptide (Lys-Gly) (interchain with G-Cter in SUMO1); alternate" evidence="1">
    <location>
        <position position="66"/>
    </location>
</feature>
<feature type="cross-link" description="Glycyl lysine isopeptide (Lys-Gly) (interchain with G-Cter in SUMO2); alternate" evidence="1">
    <location>
        <position position="66"/>
    </location>
</feature>
<keyword id="KW-0007">Acetylation</keyword>
<keyword id="KW-0143">Chaperone</keyword>
<keyword id="KW-1017">Isopeptide bond</keyword>
<keyword id="KW-1185">Reference proteome</keyword>
<keyword id="KW-0832">Ubl conjugation</keyword>
<protein>
    <recommendedName>
        <fullName>Prefoldin subunit 6</fullName>
    </recommendedName>
    <alternativeName>
        <fullName>Protein Ke2</fullName>
    </alternativeName>
</protein>
<dbReference type="EMBL" id="M65255">
    <property type="protein sequence ID" value="AAA39368.1"/>
    <property type="molecule type" value="mRNA"/>
</dbReference>
<dbReference type="EMBL" id="M65256">
    <property type="protein sequence ID" value="AAA39369.1"/>
    <property type="molecule type" value="Genomic_DNA"/>
</dbReference>
<dbReference type="EMBL" id="AF100956">
    <property type="protein sequence ID" value="AAC69895.1"/>
    <property type="molecule type" value="Genomic_DNA"/>
</dbReference>
<dbReference type="EMBL" id="AK076015">
    <property type="protein sequence ID" value="BAC36121.1"/>
    <property type="molecule type" value="mRNA"/>
</dbReference>
<dbReference type="EMBL" id="BC022974">
    <property type="protein sequence ID" value="AAH22974.1"/>
    <property type="molecule type" value="mRNA"/>
</dbReference>
<dbReference type="CCDS" id="CCDS28636.1"/>
<dbReference type="PIR" id="I53651">
    <property type="entry name" value="I53651"/>
</dbReference>
<dbReference type="RefSeq" id="NP_001172111.1">
    <property type="nucleotide sequence ID" value="NM_001185182.1"/>
</dbReference>
<dbReference type="RefSeq" id="NP_034515.1">
    <property type="nucleotide sequence ID" value="NM_010385.2"/>
</dbReference>
<dbReference type="SMR" id="Q03958"/>
<dbReference type="BioGRID" id="200157">
    <property type="interactions" value="13"/>
</dbReference>
<dbReference type="FunCoup" id="Q03958">
    <property type="interactions" value="1830"/>
</dbReference>
<dbReference type="IntAct" id="Q03958">
    <property type="interactions" value="2"/>
</dbReference>
<dbReference type="MINT" id="Q03958"/>
<dbReference type="STRING" id="10090.ENSMUSP00000025163"/>
<dbReference type="iPTMnet" id="Q03958"/>
<dbReference type="PhosphoSitePlus" id="Q03958"/>
<dbReference type="jPOST" id="Q03958"/>
<dbReference type="PaxDb" id="10090-ENSMUSP00000025163"/>
<dbReference type="PeptideAtlas" id="Q03958"/>
<dbReference type="ProteomicsDB" id="287919"/>
<dbReference type="Pumba" id="Q03958"/>
<dbReference type="TopDownProteomics" id="Q03958"/>
<dbReference type="Antibodypedia" id="29059">
    <property type="antibodies" value="125 antibodies from 24 providers"/>
</dbReference>
<dbReference type="DNASU" id="14976"/>
<dbReference type="Ensembl" id="ENSMUST00000025163.14">
    <property type="protein sequence ID" value="ENSMUSP00000025163.8"/>
    <property type="gene ID" value="ENSMUSG00000024309.16"/>
</dbReference>
<dbReference type="Ensembl" id="ENSMUST00000174048.8">
    <property type="protein sequence ID" value="ENSMUSP00000133656.2"/>
    <property type="gene ID" value="ENSMUSG00000024309.16"/>
</dbReference>
<dbReference type="Ensembl" id="ENSMUST00000179418.9">
    <property type="protein sequence ID" value="ENSMUSP00000137072.2"/>
    <property type="gene ID" value="ENSMUSG00000024309.16"/>
</dbReference>
<dbReference type="GeneID" id="14976"/>
<dbReference type="KEGG" id="mmu:14976"/>
<dbReference type="UCSC" id="uc008cah.1">
    <property type="organism name" value="mouse"/>
</dbReference>
<dbReference type="AGR" id="MGI:95908"/>
<dbReference type="CTD" id="10471"/>
<dbReference type="MGI" id="MGI:95908">
    <property type="gene designation" value="Pfdn6"/>
</dbReference>
<dbReference type="VEuPathDB" id="HostDB:ENSMUSG00000024309"/>
<dbReference type="eggNOG" id="KOG3478">
    <property type="taxonomic scope" value="Eukaryota"/>
</dbReference>
<dbReference type="GeneTree" id="ENSGT00390000010512"/>
<dbReference type="HOGENOM" id="CLU_125172_0_1_1"/>
<dbReference type="InParanoid" id="Q03958"/>
<dbReference type="OMA" id="VQTEFAQ"/>
<dbReference type="OrthoDB" id="248120at2759"/>
<dbReference type="PhylomeDB" id="Q03958"/>
<dbReference type="TreeFam" id="TF315166"/>
<dbReference type="BioGRID-ORCS" id="14976">
    <property type="hits" value="21 hits in 76 CRISPR screens"/>
</dbReference>
<dbReference type="ChiTaRS" id="Pfdn6">
    <property type="organism name" value="mouse"/>
</dbReference>
<dbReference type="PRO" id="PR:Q03958"/>
<dbReference type="Proteomes" id="UP000000589">
    <property type="component" value="Chromosome 17"/>
</dbReference>
<dbReference type="RNAct" id="Q03958">
    <property type="molecule type" value="protein"/>
</dbReference>
<dbReference type="Bgee" id="ENSMUSG00000024309">
    <property type="expression patterns" value="Expressed in floor plate of midbrain and 275 other cell types or tissues"/>
</dbReference>
<dbReference type="ExpressionAtlas" id="Q03958">
    <property type="expression patterns" value="baseline and differential"/>
</dbReference>
<dbReference type="GO" id="GO:0016272">
    <property type="term" value="C:prefoldin complex"/>
    <property type="evidence" value="ECO:0007669"/>
    <property type="project" value="Ensembl"/>
</dbReference>
<dbReference type="GO" id="GO:1990062">
    <property type="term" value="C:RPAP3/R2TP/prefoldin-like complex"/>
    <property type="evidence" value="ECO:0007669"/>
    <property type="project" value="Ensembl"/>
</dbReference>
<dbReference type="GO" id="GO:0001540">
    <property type="term" value="F:amyloid-beta binding"/>
    <property type="evidence" value="ECO:0007669"/>
    <property type="project" value="Ensembl"/>
</dbReference>
<dbReference type="GO" id="GO:0051087">
    <property type="term" value="F:protein-folding chaperone binding"/>
    <property type="evidence" value="ECO:0007669"/>
    <property type="project" value="Ensembl"/>
</dbReference>
<dbReference type="GO" id="GO:0051082">
    <property type="term" value="F:unfolded protein binding"/>
    <property type="evidence" value="ECO:0007669"/>
    <property type="project" value="Ensembl"/>
</dbReference>
<dbReference type="GO" id="GO:0051131">
    <property type="term" value="P:chaperone-mediated protein complex assembly"/>
    <property type="evidence" value="ECO:0007669"/>
    <property type="project" value="Ensembl"/>
</dbReference>
<dbReference type="GO" id="GO:1905907">
    <property type="term" value="P:negative regulation of amyloid fibril formation"/>
    <property type="evidence" value="ECO:0007669"/>
    <property type="project" value="Ensembl"/>
</dbReference>
<dbReference type="GO" id="GO:0006457">
    <property type="term" value="P:protein folding"/>
    <property type="evidence" value="ECO:0007669"/>
    <property type="project" value="Ensembl"/>
</dbReference>
<dbReference type="CDD" id="cd23161">
    <property type="entry name" value="Prefoldin_6"/>
    <property type="match status" value="1"/>
</dbReference>
<dbReference type="FunFam" id="1.10.287.370:FF:000003">
    <property type="entry name" value="Prefoldin subunit 6"/>
    <property type="match status" value="1"/>
</dbReference>
<dbReference type="Gene3D" id="1.10.287.370">
    <property type="match status" value="1"/>
</dbReference>
<dbReference type="InterPro" id="IPR002777">
    <property type="entry name" value="PFD_beta-like"/>
</dbReference>
<dbReference type="InterPro" id="IPR009053">
    <property type="entry name" value="Prefoldin"/>
</dbReference>
<dbReference type="PANTHER" id="PTHR21431">
    <property type="entry name" value="PREFOLDIN SUBUNIT 6"/>
    <property type="match status" value="1"/>
</dbReference>
<dbReference type="PANTHER" id="PTHR21431:SF0">
    <property type="entry name" value="PREFOLDIN SUBUNIT 6"/>
    <property type="match status" value="1"/>
</dbReference>
<dbReference type="Pfam" id="PF01920">
    <property type="entry name" value="Prefoldin_2"/>
    <property type="match status" value="1"/>
</dbReference>
<dbReference type="SUPFAM" id="SSF46579">
    <property type="entry name" value="Prefoldin"/>
    <property type="match status" value="1"/>
</dbReference>
<sequence>MAELIQKKLQGEVEKYQQLQKDLSKSMSGRQKLEAQLTENNIVKEELALLDGSNVVFKLLGPVLVKQELGEARATVGKRLDYITAEIKRYESQLRDLERQSEQQRETLAQLQQEFQRAQAAKAPGKA</sequence>
<proteinExistence type="evidence at protein level"/>
<evidence type="ECO:0000250" key="1">
    <source>
        <dbReference type="UniProtKB" id="O15212"/>
    </source>
</evidence>
<evidence type="ECO:0000250" key="2">
    <source>
        <dbReference type="UniProtKB" id="P52553"/>
    </source>
</evidence>
<evidence type="ECO:0000305" key="3"/>
<organism>
    <name type="scientific">Mus musculus</name>
    <name type="common">Mouse</name>
    <dbReference type="NCBI Taxonomy" id="10090"/>
    <lineage>
        <taxon>Eukaryota</taxon>
        <taxon>Metazoa</taxon>
        <taxon>Chordata</taxon>
        <taxon>Craniata</taxon>
        <taxon>Vertebrata</taxon>
        <taxon>Euteleostomi</taxon>
        <taxon>Mammalia</taxon>
        <taxon>Eutheria</taxon>
        <taxon>Euarchontoglires</taxon>
        <taxon>Glires</taxon>
        <taxon>Rodentia</taxon>
        <taxon>Myomorpha</taxon>
        <taxon>Muroidea</taxon>
        <taxon>Muridae</taxon>
        <taxon>Murinae</taxon>
        <taxon>Mus</taxon>
        <taxon>Mus</taxon>
    </lineage>
</organism>
<gene>
    <name type="primary">Pfdn6</name>
    <name type="synonym">H2-Ke2</name>
    <name type="synonym">Pfd6</name>
</gene>